<protein>
    <recommendedName>
        <fullName>Cytochrome b-c1 complex subunit 1, mitochondrial</fullName>
    </recommendedName>
    <alternativeName>
        <fullName>Complex III subunit 1</fullName>
    </alternativeName>
    <alternativeName>
        <fullName>Core protein I</fullName>
    </alternativeName>
    <alternativeName>
        <fullName>Ubiquinol-cytochrome-c reductase complex core protein 1</fullName>
    </alternativeName>
</protein>
<dbReference type="EMBL" id="AK013128">
    <property type="protein sequence ID" value="BAB28666.1"/>
    <property type="molecule type" value="mRNA"/>
</dbReference>
<dbReference type="EMBL" id="AK010553">
    <property type="protein sequence ID" value="BAB27022.1"/>
    <property type="molecule type" value="mRNA"/>
</dbReference>
<dbReference type="EMBL" id="AK151764">
    <property type="protein sequence ID" value="BAE30670.1"/>
    <property type="molecule type" value="mRNA"/>
</dbReference>
<dbReference type="EMBL" id="AK160337">
    <property type="protein sequence ID" value="BAE35744.1"/>
    <property type="molecule type" value="mRNA"/>
</dbReference>
<dbReference type="EMBL" id="CH466560">
    <property type="protein sequence ID" value="EDL21324.1"/>
    <property type="molecule type" value="Genomic_DNA"/>
</dbReference>
<dbReference type="CCDS" id="CCDS23540.1"/>
<dbReference type="RefSeq" id="NP_079683.2">
    <property type="nucleotide sequence ID" value="NM_025407.2"/>
</dbReference>
<dbReference type="PDB" id="7O37">
    <property type="method" value="EM"/>
    <property type="resolution" value="3.20 A"/>
    <property type="chains" value="A/L=35-480"/>
</dbReference>
<dbReference type="PDB" id="7O3C">
    <property type="method" value="EM"/>
    <property type="resolution" value="3.30 A"/>
    <property type="chains" value="A/L=35-480"/>
</dbReference>
<dbReference type="PDB" id="7O3E">
    <property type="method" value="EM"/>
    <property type="resolution" value="3.60 A"/>
    <property type="chains" value="A/L=35-480"/>
</dbReference>
<dbReference type="PDB" id="7O3H">
    <property type="method" value="EM"/>
    <property type="resolution" value="2.60 A"/>
    <property type="chains" value="A/L=35-480"/>
</dbReference>
<dbReference type="PDB" id="8IAO">
    <property type="method" value="EM"/>
    <property type="resolution" value="4.20 A"/>
    <property type="chains" value="AA/Aa=1-480"/>
</dbReference>
<dbReference type="PDB" id="8IAR">
    <property type="method" value="EM"/>
    <property type="resolution" value="3.40 A"/>
    <property type="chains" value="AA/Aa=1-480"/>
</dbReference>
<dbReference type="PDB" id="8IB4">
    <property type="method" value="EM"/>
    <property type="resolution" value="4.30 A"/>
    <property type="chains" value="AA/Aa=1-480"/>
</dbReference>
<dbReference type="PDB" id="8IB7">
    <property type="method" value="EM"/>
    <property type="resolution" value="3.40 A"/>
    <property type="chains" value="AA/Aa=1-480"/>
</dbReference>
<dbReference type="PDB" id="8IB9">
    <property type="method" value="EM"/>
    <property type="resolution" value="4.30 A"/>
    <property type="chains" value="AA/Aa=1-480"/>
</dbReference>
<dbReference type="PDB" id="8IBC">
    <property type="method" value="EM"/>
    <property type="resolution" value="3.60 A"/>
    <property type="chains" value="AA/Aa=1-480"/>
</dbReference>
<dbReference type="PDB" id="8IBD">
    <property type="method" value="EM"/>
    <property type="resolution" value="4.20 A"/>
    <property type="chains" value="AA/Aa=1-480"/>
</dbReference>
<dbReference type="PDB" id="8IBG">
    <property type="method" value="EM"/>
    <property type="resolution" value="3.80 A"/>
    <property type="chains" value="AA/Aa=1-480"/>
</dbReference>
<dbReference type="PDB" id="8IC2">
    <property type="method" value="EM"/>
    <property type="resolution" value="6.30 A"/>
    <property type="chains" value="AA/Aa=1-480"/>
</dbReference>
<dbReference type="PDB" id="8IC5">
    <property type="method" value="EM"/>
    <property type="resolution" value="4.10 A"/>
    <property type="chains" value="AA/Aa=1-480"/>
</dbReference>
<dbReference type="PDB" id="8PW5">
    <property type="method" value="EM"/>
    <property type="resolution" value="3.60 A"/>
    <property type="chains" value="A/L=1-480"/>
</dbReference>
<dbReference type="PDB" id="8PW6">
    <property type="method" value="EM"/>
    <property type="resolution" value="3.30 A"/>
    <property type="chains" value="A/L=1-480"/>
</dbReference>
<dbReference type="PDB" id="8PW7">
    <property type="method" value="EM"/>
    <property type="resolution" value="3.50 A"/>
    <property type="chains" value="A/L=1-480"/>
</dbReference>
<dbReference type="PDB" id="8UCA">
    <property type="method" value="EM"/>
    <property type="resolution" value="3.70 A"/>
    <property type="chains" value="3A/3L=35-480"/>
</dbReference>
<dbReference type="PDBsum" id="7O37"/>
<dbReference type="PDBsum" id="7O3C"/>
<dbReference type="PDBsum" id="7O3E"/>
<dbReference type="PDBsum" id="7O3H"/>
<dbReference type="PDBsum" id="8IAO"/>
<dbReference type="PDBsum" id="8IAR"/>
<dbReference type="PDBsum" id="8IB4"/>
<dbReference type="PDBsum" id="8IB7"/>
<dbReference type="PDBsum" id="8IB9"/>
<dbReference type="PDBsum" id="8IBC"/>
<dbReference type="PDBsum" id="8IBD"/>
<dbReference type="PDBsum" id="8IBG"/>
<dbReference type="PDBsum" id="8IC2"/>
<dbReference type="PDBsum" id="8IC5"/>
<dbReference type="PDBsum" id="8PW5"/>
<dbReference type="PDBsum" id="8PW6"/>
<dbReference type="PDBsum" id="8PW7"/>
<dbReference type="PDBsum" id="8UCA"/>
<dbReference type="EMDB" id="EMD-12702"/>
<dbReference type="EMDB" id="EMD-12703"/>
<dbReference type="EMDB" id="EMD-12705"/>
<dbReference type="EMDB" id="EMD-12706"/>
<dbReference type="EMDB" id="EMD-17989"/>
<dbReference type="EMDB" id="EMD-17990"/>
<dbReference type="EMDB" id="EMD-17991"/>
<dbReference type="EMDB" id="EMD-35313"/>
<dbReference type="EMDB" id="EMD-35316"/>
<dbReference type="EMDB" id="EMD-35331"/>
<dbReference type="EMDB" id="EMD-35334"/>
<dbReference type="EMDB" id="EMD-35336"/>
<dbReference type="EMDB" id="EMD-35339"/>
<dbReference type="EMDB" id="EMD-35340"/>
<dbReference type="EMDB" id="EMD-35343"/>
<dbReference type="EMDB" id="EMD-35352"/>
<dbReference type="EMDB" id="EMD-35355"/>
<dbReference type="EMDB" id="EMD-42122"/>
<dbReference type="SMR" id="Q9CZ13"/>
<dbReference type="BioGRID" id="204459">
    <property type="interactions" value="75"/>
</dbReference>
<dbReference type="ComplexPortal" id="CPX-563">
    <property type="entry name" value="Mitochondrial respiratory chain complex III"/>
</dbReference>
<dbReference type="CORUM" id="Q9CZ13"/>
<dbReference type="FunCoup" id="Q9CZ13">
    <property type="interactions" value="1790"/>
</dbReference>
<dbReference type="IntAct" id="Q9CZ13">
    <property type="interactions" value="11"/>
</dbReference>
<dbReference type="MINT" id="Q9CZ13"/>
<dbReference type="STRING" id="10090.ENSMUSP00000026743"/>
<dbReference type="MEROPS" id="M16.975"/>
<dbReference type="MEROPS" id="M16.981"/>
<dbReference type="GlyGen" id="Q9CZ13">
    <property type="glycosylation" value="2 sites, 1 O-linked glycan (2 sites)"/>
</dbReference>
<dbReference type="iPTMnet" id="Q9CZ13"/>
<dbReference type="PhosphoSitePlus" id="Q9CZ13"/>
<dbReference type="SwissPalm" id="Q9CZ13"/>
<dbReference type="REPRODUCTION-2DPAGE" id="IPI00111885"/>
<dbReference type="REPRODUCTION-2DPAGE" id="Q9CZ13"/>
<dbReference type="jPOST" id="Q9CZ13"/>
<dbReference type="PaxDb" id="10090-ENSMUSP00000026743"/>
<dbReference type="PeptideAtlas" id="Q9CZ13"/>
<dbReference type="ProteomicsDB" id="301902"/>
<dbReference type="Pumba" id="Q9CZ13"/>
<dbReference type="TopDownProteomics" id="Q9CZ13"/>
<dbReference type="Antibodypedia" id="1257">
    <property type="antibodies" value="374 antibodies from 29 providers"/>
</dbReference>
<dbReference type="DNASU" id="22273"/>
<dbReference type="Ensembl" id="ENSMUST00000026743.14">
    <property type="protein sequence ID" value="ENSMUSP00000026743.9"/>
    <property type="gene ID" value="ENSMUSG00000025651.15"/>
</dbReference>
<dbReference type="GeneID" id="22273"/>
<dbReference type="KEGG" id="mmu:22273"/>
<dbReference type="UCSC" id="uc009rrg.1">
    <property type="organism name" value="mouse"/>
</dbReference>
<dbReference type="AGR" id="MGI:107876"/>
<dbReference type="CTD" id="7384"/>
<dbReference type="MGI" id="MGI:107876">
    <property type="gene designation" value="Uqcrc1"/>
</dbReference>
<dbReference type="VEuPathDB" id="HostDB:ENSMUSG00000025651"/>
<dbReference type="eggNOG" id="KOG0960">
    <property type="taxonomic scope" value="Eukaryota"/>
</dbReference>
<dbReference type="GeneTree" id="ENSGT00940000158931"/>
<dbReference type="HOGENOM" id="CLU_009902_4_2_1"/>
<dbReference type="InParanoid" id="Q9CZ13"/>
<dbReference type="OMA" id="HFAQGEW"/>
<dbReference type="OrthoDB" id="10251424at2759"/>
<dbReference type="PhylomeDB" id="Q9CZ13"/>
<dbReference type="TreeFam" id="TF105032"/>
<dbReference type="Reactome" id="R-MMU-611105">
    <property type="pathway name" value="Respiratory electron transport"/>
</dbReference>
<dbReference type="Reactome" id="R-MMU-9865881">
    <property type="pathway name" value="Complex III assembly"/>
</dbReference>
<dbReference type="BioGRID-ORCS" id="22273">
    <property type="hits" value="24 hits in 79 CRISPR screens"/>
</dbReference>
<dbReference type="CD-CODE" id="CE726F99">
    <property type="entry name" value="Postsynaptic density"/>
</dbReference>
<dbReference type="ChiTaRS" id="Uqcrc1">
    <property type="organism name" value="mouse"/>
</dbReference>
<dbReference type="PRO" id="PR:Q9CZ13"/>
<dbReference type="Proteomes" id="UP000000589">
    <property type="component" value="Chromosome 9"/>
</dbReference>
<dbReference type="RNAct" id="Q9CZ13">
    <property type="molecule type" value="protein"/>
</dbReference>
<dbReference type="Bgee" id="ENSMUSG00000025651">
    <property type="expression patterns" value="Expressed in proximal tubule and 146 other cell types or tissues"/>
</dbReference>
<dbReference type="ExpressionAtlas" id="Q9CZ13">
    <property type="expression patterns" value="baseline and differential"/>
</dbReference>
<dbReference type="GO" id="GO:0005743">
    <property type="term" value="C:mitochondrial inner membrane"/>
    <property type="evidence" value="ECO:0000314"/>
    <property type="project" value="UniProtKB"/>
</dbReference>
<dbReference type="GO" id="GO:0005739">
    <property type="term" value="C:mitochondrion"/>
    <property type="evidence" value="ECO:0000314"/>
    <property type="project" value="MGI"/>
</dbReference>
<dbReference type="GO" id="GO:0043209">
    <property type="term" value="C:myelin sheath"/>
    <property type="evidence" value="ECO:0007005"/>
    <property type="project" value="UniProtKB"/>
</dbReference>
<dbReference type="GO" id="GO:0045275">
    <property type="term" value="C:respiratory chain complex III"/>
    <property type="evidence" value="ECO:0000314"/>
    <property type="project" value="UniProtKB"/>
</dbReference>
<dbReference type="GO" id="GO:0046872">
    <property type="term" value="F:metal ion binding"/>
    <property type="evidence" value="ECO:0007669"/>
    <property type="project" value="InterPro"/>
</dbReference>
<dbReference type="GO" id="GO:0044877">
    <property type="term" value="F:protein-containing complex binding"/>
    <property type="evidence" value="ECO:0007669"/>
    <property type="project" value="Ensembl"/>
</dbReference>
<dbReference type="GO" id="GO:0031625">
    <property type="term" value="F:ubiquitin protein ligase binding"/>
    <property type="evidence" value="ECO:0007669"/>
    <property type="project" value="Ensembl"/>
</dbReference>
<dbReference type="GO" id="GO:0045333">
    <property type="term" value="P:cellular respiration"/>
    <property type="evidence" value="ECO:0000303"/>
    <property type="project" value="ComplexPortal"/>
</dbReference>
<dbReference type="GO" id="GO:0006122">
    <property type="term" value="P:mitochondrial electron transport, ubiquinol to cytochrome c"/>
    <property type="evidence" value="ECO:0000314"/>
    <property type="project" value="MGI"/>
</dbReference>
<dbReference type="GO" id="GO:0034551">
    <property type="term" value="P:mitochondrial respiratory chain complex III assembly"/>
    <property type="evidence" value="ECO:0000250"/>
    <property type="project" value="UniProtKB"/>
</dbReference>
<dbReference type="GO" id="GO:0014823">
    <property type="term" value="P:response to activity"/>
    <property type="evidence" value="ECO:0007669"/>
    <property type="project" value="Ensembl"/>
</dbReference>
<dbReference type="GO" id="GO:0043279">
    <property type="term" value="P:response to alkaloid"/>
    <property type="evidence" value="ECO:0007669"/>
    <property type="project" value="Ensembl"/>
</dbReference>
<dbReference type="FunFam" id="3.30.830.10:FF:000016">
    <property type="entry name" value="Cytochrome b-c1 complex subunit 1, mitochondrial"/>
    <property type="match status" value="1"/>
</dbReference>
<dbReference type="FunFam" id="3.30.830.10:FF:000001">
    <property type="entry name" value="Mitochondrial-processing peptidase subunit beta, mitochondrial"/>
    <property type="match status" value="1"/>
</dbReference>
<dbReference type="Gene3D" id="3.30.830.10">
    <property type="entry name" value="Metalloenzyme, LuxS/M16 peptidase-like"/>
    <property type="match status" value="2"/>
</dbReference>
<dbReference type="InterPro" id="IPR011249">
    <property type="entry name" value="Metalloenz_LuxS/M16"/>
</dbReference>
<dbReference type="InterPro" id="IPR050361">
    <property type="entry name" value="MPP/UQCRC_Complex"/>
</dbReference>
<dbReference type="InterPro" id="IPR011765">
    <property type="entry name" value="Pept_M16_N"/>
</dbReference>
<dbReference type="InterPro" id="IPR007863">
    <property type="entry name" value="Peptidase_M16_C"/>
</dbReference>
<dbReference type="PANTHER" id="PTHR11851:SF116">
    <property type="entry name" value="CYTOCHROME B-C1 COMPLEX SUBUNIT 1, MITOCHONDRIAL"/>
    <property type="match status" value="1"/>
</dbReference>
<dbReference type="PANTHER" id="PTHR11851">
    <property type="entry name" value="METALLOPROTEASE"/>
    <property type="match status" value="1"/>
</dbReference>
<dbReference type="Pfam" id="PF00675">
    <property type="entry name" value="Peptidase_M16"/>
    <property type="match status" value="1"/>
</dbReference>
<dbReference type="Pfam" id="PF05193">
    <property type="entry name" value="Peptidase_M16_C"/>
    <property type="match status" value="1"/>
</dbReference>
<dbReference type="SUPFAM" id="SSF63411">
    <property type="entry name" value="LuxS/MPP-like metallohydrolase"/>
    <property type="match status" value="2"/>
</dbReference>
<gene>
    <name type="primary">Uqcrc1</name>
</gene>
<proteinExistence type="evidence at protein level"/>
<comment type="function">
    <text evidence="2 3 4 9 11">Component of the ubiquinol-cytochrome c oxidoreductase, a multisubunit transmembrane complex that is part of the mitochondrial electron transport chain which drives oxidative phosphorylation (PubMed:34616041, PubMed:38575788). The respiratory chain contains 3 multisubunit complexes succinate dehydrogenase (complex II, CII), ubiquinol-cytochrome c oxidoreductase (cytochrome b-c1 complex, complex III, CIII) and cytochrome c oxidase (complex IV, CIV), that cooperate to transfer electrons derived from NADH and succinate to molecular oxygen, creating an electrochemical gradient over the inner membrane that drives transmembrane transport and the ATP synthase (PubMed:34616041, PubMed:38575788). The cytochrome b-c1 complex catalyzes electron transfer from ubiquinol to cytochrome c, linking this redox reaction to translocation of protons across the mitochondrial inner membrane, with protons being carried across the membrane as hydrogens on the quinol. In the process called Q cycle, 2 protons are consumed from the matrix, 4 protons are released into the intermembrane space and 2 electrons are passed to cytochrome c (By similarity). The 2 core subunits UQCRC1/QCR1 and UQCRC2/QCR2 are homologous to the 2 mitochondrial-processing peptidase (MPP) subunits beta-MPP and alpha-MPP respectively, and they seem to have preserved their MPP processing properties. May be involved in the in situ processing of UQCRFS1 into the mature Rieske protein and its mitochondrial targeting sequence (MTS)/subunit 9 when incorporated into complex III (By similarity). Seems to play an important role in the maintenance of proper mitochondrial function in nigral dopaminergic neurons (By similarity).</text>
</comment>
<comment type="subunit">
    <text evidence="6 8 9 10 11">Component of the ubiquinol-cytochrome c oxidoreductase (cytochrome b-c1 complex, complex III, CIII), a multisubunit enzyme composed of 11 subunits (PubMed:34616041, PubMed:38575788). The complex is composed of 3 respiratory subunits cytochrome b, cytochrome c1 and Rieske protein UQCRFS1, 2 core protein subunits UQCRC1/QCR1 and UQCRC2/QCR2, and 6 low-molecular weight protein subunits UQCRH/QCR6, UQCRB/QCR7, UQCRQ/QCR8, UQCR10/QCR9, UQCR11/QCR10 and subunit 9, the cleavage product of Rieske protein UQCRFS1 (PubMed:34616041, PubMed:38575788). The complex exists as an obligatory dimer and forms supercomplexes (SCs) in the inner mitochondrial membrane with NADH-ubiquinone oxidoreductase (complex I, CI) and cytochrome c oxidase (complex IV, CIV), resulting in different assemblies (supercomplex SCI(1)III(2)IV(1) and megacomplex MCI(2)III(2)IV(2)) (PubMed:19026783, PubMed:34616041, PubMed:38575788). Interacts with UQCC6 (PubMed:32161263). Interacts with STMP1 (PubMed:35101990).</text>
</comment>
<comment type="subcellular location">
    <subcellularLocation>
        <location evidence="9 11">Mitochondrion inner membrane</location>
        <topology evidence="9 11">Peripheral membrane protein</topology>
        <orientation evidence="9 11">Matrix side</orientation>
    </subcellularLocation>
</comment>
<comment type="tissue specificity">
    <text evidence="7">Expressed in neurons and astrocytes of the cerebral cortex and hippocampus (at protein level).</text>
</comment>
<comment type="PTM">
    <text>Acetylation of Lys-138 is observed in liver mitochondria from fasted mice but not from fed mice.</text>
</comment>
<comment type="disruption phenotype">
    <text evidence="7">Results in early embryonic lethality.</text>
</comment>
<comment type="similarity">
    <text evidence="12">Belongs to the peptidase M16 family. UQCRC1/QCR1 subfamily.</text>
</comment>
<reference key="1">
    <citation type="journal article" date="2005" name="Science">
        <title>The transcriptional landscape of the mammalian genome.</title>
        <authorList>
            <person name="Carninci P."/>
            <person name="Kasukawa T."/>
            <person name="Katayama S."/>
            <person name="Gough J."/>
            <person name="Frith M.C."/>
            <person name="Maeda N."/>
            <person name="Oyama R."/>
            <person name="Ravasi T."/>
            <person name="Lenhard B."/>
            <person name="Wells C."/>
            <person name="Kodzius R."/>
            <person name="Shimokawa K."/>
            <person name="Bajic V.B."/>
            <person name="Brenner S.E."/>
            <person name="Batalov S."/>
            <person name="Forrest A.R."/>
            <person name="Zavolan M."/>
            <person name="Davis M.J."/>
            <person name="Wilming L.G."/>
            <person name="Aidinis V."/>
            <person name="Allen J.E."/>
            <person name="Ambesi-Impiombato A."/>
            <person name="Apweiler R."/>
            <person name="Aturaliya R.N."/>
            <person name="Bailey T.L."/>
            <person name="Bansal M."/>
            <person name="Baxter L."/>
            <person name="Beisel K.W."/>
            <person name="Bersano T."/>
            <person name="Bono H."/>
            <person name="Chalk A.M."/>
            <person name="Chiu K.P."/>
            <person name="Choudhary V."/>
            <person name="Christoffels A."/>
            <person name="Clutterbuck D.R."/>
            <person name="Crowe M.L."/>
            <person name="Dalla E."/>
            <person name="Dalrymple B.P."/>
            <person name="de Bono B."/>
            <person name="Della Gatta G."/>
            <person name="di Bernardo D."/>
            <person name="Down T."/>
            <person name="Engstrom P."/>
            <person name="Fagiolini M."/>
            <person name="Faulkner G."/>
            <person name="Fletcher C.F."/>
            <person name="Fukushima T."/>
            <person name="Furuno M."/>
            <person name="Futaki S."/>
            <person name="Gariboldi M."/>
            <person name="Georgii-Hemming P."/>
            <person name="Gingeras T.R."/>
            <person name="Gojobori T."/>
            <person name="Green R.E."/>
            <person name="Gustincich S."/>
            <person name="Harbers M."/>
            <person name="Hayashi Y."/>
            <person name="Hensch T.K."/>
            <person name="Hirokawa N."/>
            <person name="Hill D."/>
            <person name="Huminiecki L."/>
            <person name="Iacono M."/>
            <person name="Ikeo K."/>
            <person name="Iwama A."/>
            <person name="Ishikawa T."/>
            <person name="Jakt M."/>
            <person name="Kanapin A."/>
            <person name="Katoh M."/>
            <person name="Kawasawa Y."/>
            <person name="Kelso J."/>
            <person name="Kitamura H."/>
            <person name="Kitano H."/>
            <person name="Kollias G."/>
            <person name="Krishnan S.P."/>
            <person name="Kruger A."/>
            <person name="Kummerfeld S.K."/>
            <person name="Kurochkin I.V."/>
            <person name="Lareau L.F."/>
            <person name="Lazarevic D."/>
            <person name="Lipovich L."/>
            <person name="Liu J."/>
            <person name="Liuni S."/>
            <person name="McWilliam S."/>
            <person name="Madan Babu M."/>
            <person name="Madera M."/>
            <person name="Marchionni L."/>
            <person name="Matsuda H."/>
            <person name="Matsuzawa S."/>
            <person name="Miki H."/>
            <person name="Mignone F."/>
            <person name="Miyake S."/>
            <person name="Morris K."/>
            <person name="Mottagui-Tabar S."/>
            <person name="Mulder N."/>
            <person name="Nakano N."/>
            <person name="Nakauchi H."/>
            <person name="Ng P."/>
            <person name="Nilsson R."/>
            <person name="Nishiguchi S."/>
            <person name="Nishikawa S."/>
            <person name="Nori F."/>
            <person name="Ohara O."/>
            <person name="Okazaki Y."/>
            <person name="Orlando V."/>
            <person name="Pang K.C."/>
            <person name="Pavan W.J."/>
            <person name="Pavesi G."/>
            <person name="Pesole G."/>
            <person name="Petrovsky N."/>
            <person name="Piazza S."/>
            <person name="Reed J."/>
            <person name="Reid J.F."/>
            <person name="Ring B.Z."/>
            <person name="Ringwald M."/>
            <person name="Rost B."/>
            <person name="Ruan Y."/>
            <person name="Salzberg S.L."/>
            <person name="Sandelin A."/>
            <person name="Schneider C."/>
            <person name="Schoenbach C."/>
            <person name="Sekiguchi K."/>
            <person name="Semple C.A."/>
            <person name="Seno S."/>
            <person name="Sessa L."/>
            <person name="Sheng Y."/>
            <person name="Shibata Y."/>
            <person name="Shimada H."/>
            <person name="Shimada K."/>
            <person name="Silva D."/>
            <person name="Sinclair B."/>
            <person name="Sperling S."/>
            <person name="Stupka E."/>
            <person name="Sugiura K."/>
            <person name="Sultana R."/>
            <person name="Takenaka Y."/>
            <person name="Taki K."/>
            <person name="Tammoja K."/>
            <person name="Tan S.L."/>
            <person name="Tang S."/>
            <person name="Taylor M.S."/>
            <person name="Tegner J."/>
            <person name="Teichmann S.A."/>
            <person name="Ueda H.R."/>
            <person name="van Nimwegen E."/>
            <person name="Verardo R."/>
            <person name="Wei C.L."/>
            <person name="Yagi K."/>
            <person name="Yamanishi H."/>
            <person name="Zabarovsky E."/>
            <person name="Zhu S."/>
            <person name="Zimmer A."/>
            <person name="Hide W."/>
            <person name="Bult C."/>
            <person name="Grimmond S.M."/>
            <person name="Teasdale R.D."/>
            <person name="Liu E.T."/>
            <person name="Brusic V."/>
            <person name="Quackenbush J."/>
            <person name="Wahlestedt C."/>
            <person name="Mattick J.S."/>
            <person name="Hume D.A."/>
            <person name="Kai C."/>
            <person name="Sasaki D."/>
            <person name="Tomaru Y."/>
            <person name="Fukuda S."/>
            <person name="Kanamori-Katayama M."/>
            <person name="Suzuki M."/>
            <person name="Aoki J."/>
            <person name="Arakawa T."/>
            <person name="Iida J."/>
            <person name="Imamura K."/>
            <person name="Itoh M."/>
            <person name="Kato T."/>
            <person name="Kawaji H."/>
            <person name="Kawagashira N."/>
            <person name="Kawashima T."/>
            <person name="Kojima M."/>
            <person name="Kondo S."/>
            <person name="Konno H."/>
            <person name="Nakano K."/>
            <person name="Ninomiya N."/>
            <person name="Nishio T."/>
            <person name="Okada M."/>
            <person name="Plessy C."/>
            <person name="Shibata K."/>
            <person name="Shiraki T."/>
            <person name="Suzuki S."/>
            <person name="Tagami M."/>
            <person name="Waki K."/>
            <person name="Watahiki A."/>
            <person name="Okamura-Oho Y."/>
            <person name="Suzuki H."/>
            <person name="Kawai J."/>
            <person name="Hayashizaki Y."/>
        </authorList>
    </citation>
    <scope>NUCLEOTIDE SEQUENCE [LARGE SCALE MRNA]</scope>
    <source>
        <strain>C57BL/6J</strain>
        <tissue>Bone marrow</tissue>
        <tissue>Embryo</tissue>
    </source>
</reference>
<reference key="2">
    <citation type="submission" date="2005-07" db="EMBL/GenBank/DDBJ databases">
        <authorList>
            <person name="Mural R.J."/>
            <person name="Adams M.D."/>
            <person name="Myers E.W."/>
            <person name="Smith H.O."/>
            <person name="Venter J.C."/>
        </authorList>
    </citation>
    <scope>NUCLEOTIDE SEQUENCE [LARGE SCALE GENOMIC DNA]</scope>
</reference>
<reference key="3">
    <citation type="submission" date="2007-07" db="UniProtKB">
        <authorList>
            <person name="Lubec G."/>
            <person name="Kang S.U."/>
            <person name="Klug S."/>
            <person name="Yang J.W."/>
            <person name="Zigmond M."/>
        </authorList>
    </citation>
    <scope>PROTEIN SEQUENCE OF 59-80; 86-99; 112-134; 143-163; 214-222; 229-248; 256-276; 379-390; 397-442; 448-470 AND 473-479</scope>
    <scope>IDENTIFICATION BY MASS SPECTROMETRY</scope>
    <source>
        <strain>C57BL/6J</strain>
        <tissue>Brain</tissue>
        <tissue>Hippocampus</tissue>
    </source>
</reference>
<reference key="4">
    <citation type="journal article" date="2008" name="Mol. Cell">
        <title>Respiratory active mitochondrial supercomplexes.</title>
        <authorList>
            <person name="Acin-Perez R."/>
            <person name="Fernandez-Silva P."/>
            <person name="Peleato M.L."/>
            <person name="Perez-Martos A."/>
            <person name="Enriquez J.A."/>
        </authorList>
    </citation>
    <scope>SUBUNIT</scope>
</reference>
<reference key="5">
    <citation type="journal article" date="2010" name="Cell">
        <title>A tissue-specific atlas of mouse protein phosphorylation and expression.</title>
        <authorList>
            <person name="Huttlin E.L."/>
            <person name="Jedrychowski M.P."/>
            <person name="Elias J.E."/>
            <person name="Goswami T."/>
            <person name="Rad R."/>
            <person name="Beausoleil S.A."/>
            <person name="Villen J."/>
            <person name="Haas W."/>
            <person name="Sowa M.E."/>
            <person name="Gygi S.P."/>
        </authorList>
    </citation>
    <scope>IDENTIFICATION BY MASS SPECTROMETRY [LARGE SCALE ANALYSIS]</scope>
    <source>
        <tissue>Brain</tissue>
        <tissue>Brown adipose tissue</tissue>
        <tissue>Heart</tissue>
        <tissue>Kidney</tissue>
        <tissue>Liver</tissue>
        <tissue>Lung</tissue>
        <tissue>Pancreas</tissue>
        <tissue>Spleen</tissue>
        <tissue>Testis</tissue>
    </source>
</reference>
<reference key="6">
    <citation type="journal article" date="2013" name="Mol. Cell">
        <title>SIRT5-mediated lysine desuccinylation impacts diverse metabolic pathways.</title>
        <authorList>
            <person name="Park J."/>
            <person name="Chen Y."/>
            <person name="Tishkoff D.X."/>
            <person name="Peng C."/>
            <person name="Tan M."/>
            <person name="Dai L."/>
            <person name="Xie Z."/>
            <person name="Zhang Y."/>
            <person name="Zwaans B.M."/>
            <person name="Skinner M.E."/>
            <person name="Lombard D.B."/>
            <person name="Zhao Y."/>
        </authorList>
    </citation>
    <scope>SUCCINYLATION [LARGE SCALE ANALYSIS] AT LYS-163</scope>
    <scope>IDENTIFICATION BY MASS SPECTROMETRY [LARGE SCALE ANALYSIS]</scope>
    <source>
        <tissue>Liver</tissue>
    </source>
</reference>
<reference key="7">
    <citation type="journal article" date="2013" name="Proc. Natl. Acad. Sci. U.S.A.">
        <title>Label-free quantitative proteomics of the lysine acetylome in mitochondria identifies substrates of SIRT3 in metabolic pathways.</title>
        <authorList>
            <person name="Rardin M.J."/>
            <person name="Newman J.C."/>
            <person name="Held J.M."/>
            <person name="Cusack M.P."/>
            <person name="Sorensen D.J."/>
            <person name="Li B."/>
            <person name="Schilling B."/>
            <person name="Mooney S.D."/>
            <person name="Kahn C.R."/>
            <person name="Verdin E."/>
            <person name="Gibson B.W."/>
        </authorList>
    </citation>
    <scope>ACETYLATION [LARGE SCALE ANALYSIS] AT LYS-111; LYS-138; LYS-163 AND LYS-248</scope>
    <scope>IDENTIFICATION BY MASS SPECTROMETRY [LARGE SCALE ANALYSIS]</scope>
    <source>
        <tissue>Liver</tissue>
    </source>
</reference>
<reference key="8">
    <citation type="journal article" date="2019" name="Cell. Mol. Life Sci.">
        <title>Critical role of UQCRC1 in embryo survival, brain ischemic tolerance and normal cognition in mice.</title>
        <authorList>
            <person name="Shan W."/>
            <person name="Li J."/>
            <person name="Xu W."/>
            <person name="Li H."/>
            <person name="Zuo Z."/>
        </authorList>
    </citation>
    <scope>TISSUE SPECIFICITY</scope>
    <scope>DISRUPTION PHENOTYPE</scope>
</reference>
<reference key="9">
    <citation type="journal article" date="2020" name="Nat. Commun.">
        <title>Mitochondrial peptide BRAWNIN is essential for vertebrate respiratory complex III assembly.</title>
        <authorList>
            <person name="Zhang S."/>
            <person name="Reljic B."/>
            <person name="Liang C."/>
            <person name="Kerouanton B."/>
            <person name="Francisco J.C."/>
            <person name="Peh J.H."/>
            <person name="Mary C."/>
            <person name="Jagannathan N.S."/>
            <person name="Olexiouk V."/>
            <person name="Tang C."/>
            <person name="Fidelito G."/>
            <person name="Nama S."/>
            <person name="Cheng R.K."/>
            <person name="Wee C.L."/>
            <person name="Wang L.C."/>
            <person name="Duek Roggli P."/>
            <person name="Sampath P."/>
            <person name="Lane L."/>
            <person name="Petretto E."/>
            <person name="Sobota R.M."/>
            <person name="Jesuthasan S."/>
            <person name="Tucker-Kellogg L."/>
            <person name="Reversade B."/>
            <person name="Menschaert G."/>
            <person name="Sun L."/>
            <person name="Stroud D.A."/>
            <person name="Ho L."/>
        </authorList>
    </citation>
    <scope>INTERACTION WITH UQCC6</scope>
</reference>
<reference key="10">
    <citation type="journal article" date="2022" name="Proc. Natl. Acad. Sci. U.S.A.">
        <title>The cardiac-enriched microprotein mitolamban regulates mitochondrial respiratory complex assembly and function in mice.</title>
        <authorList>
            <person name="Makarewich C.A."/>
            <person name="Munir A.Z."/>
            <person name="Bezprozvannaya S."/>
            <person name="Gibson A.M."/>
            <person name="Young Kim S."/>
            <person name="Martin-Sandoval M.S."/>
            <person name="Mathews T.P."/>
            <person name="Szweda L.I."/>
            <person name="Bassel-Duby R."/>
            <person name="Olson E.N."/>
        </authorList>
    </citation>
    <scope>INTERACTION WITH STMP1</scope>
</reference>
<reference evidence="13 14 15" key="11">
    <citation type="journal article" date="2021" name="Nature">
        <title>Structure and assembly of the mammalian mitochondrial supercomplex CIII2CIV.</title>
        <authorList>
            <person name="Vercellino I."/>
            <person name="Sazanov L.A."/>
        </authorList>
    </citation>
    <scope>STRUCTURE BY ELECTRON MICROSCOPY (3.20 ANGSTROMS) IN COMPLEX WITH MITOCHONDRIAL RESPIRATORY SUPERCOMPLEX</scope>
    <scope>FUNCTION</scope>
    <scope>SUBCELLULAR LOCATION</scope>
    <scope>SUBUNIT</scope>
</reference>
<reference evidence="16" key="12">
    <citation type="journal article" date="2024" name="Nat. Struct. Mol. Biol.">
        <title>SCAF1 drives the compositional diversity of mammalian respirasomes.</title>
        <authorList>
            <person name="Vercellino I."/>
            <person name="Sazanov L.A."/>
        </authorList>
    </citation>
    <scope>STRUCTURE BY ELECTRON MICROSCOPY (3.60 ANGSTROMS) IN COMPLEX WITH MITOCHONDRIAL RESPIRATORY SUPERCOMPLEX</scope>
    <scope>FUNCTION</scope>
    <scope>SUBCELLULAR LOCATION</scope>
    <scope>SUBUNIT</scope>
</reference>
<sequence length="480" mass="52852">MAASAVCRAACSGTQVLLRTRRSPALLRLPALRGTATFAQALQSVPETQVSILDNGLRVASEQSSHATCTVGVWIDAGSRYETEKNNGAGYFLEHLAFKGTKNRPGNALEKEVESIGAHLNAYSTREHTAYLIKALSKDLPKVVELLADIVQNSSLEDSQIEKERDVILREMQENDASMQNVVFDYLHATAFQGTPLAQAVEGPSENVRRLSRTDLTDYLNRHYKAPRMVLAAAGGVEHQQLLDLAQKHLSSVSRVYEEDAVPGLTPCRFTGSEIRHRDDALPLAHVAIAVEGPGWANPDNVTLQVANAIIGHYDCTYGGGVHLSSPLASVAVANKLCQSFQTFNISYSDTGLLGAHFVCDAMSIDDMVFFLQGQWMRLCTSATESEVTRGKNILRNALVSHLDGTTPVCEDIGRSLLTYGRRIPLAEWESRIQEVDAQMLRDICSKYFYDQCPAVAGYGPIEQLPDYNRIRSGMFWLRF</sequence>
<feature type="transit peptide" description="Mitochondrion" evidence="1">
    <location>
        <begin position="1"/>
        <end position="34"/>
    </location>
</feature>
<feature type="chain" id="PRO_0000026787" description="Cytochrome b-c1 complex subunit 1, mitochondrial">
    <location>
        <begin position="35"/>
        <end position="480"/>
    </location>
</feature>
<feature type="modified residue" description="N6-acetyllysine" evidence="17">
    <location>
        <position position="111"/>
    </location>
</feature>
<feature type="modified residue" description="N6-acetyllysine" evidence="17">
    <location>
        <position position="138"/>
    </location>
</feature>
<feature type="modified residue" description="N6-acetyllysine; alternate" evidence="17">
    <location>
        <position position="163"/>
    </location>
</feature>
<feature type="modified residue" description="N6-succinyllysine; alternate" evidence="18">
    <location>
        <position position="163"/>
    </location>
</feature>
<feature type="modified residue" description="Phosphoserine" evidence="5">
    <location>
        <position position="212"/>
    </location>
</feature>
<feature type="modified residue" description="Phosphothreonine" evidence="5">
    <location>
        <position position="214"/>
    </location>
</feature>
<feature type="modified residue" description="N6-acetyllysine" evidence="17">
    <location>
        <position position="248"/>
    </location>
</feature>
<feature type="sequence conflict" description="In Ref. 1; BAB28666." evidence="12" ref="1">
    <original>H</original>
    <variation>N</variation>
    <location>
        <position position="223"/>
    </location>
</feature>
<feature type="sequence conflict" description="In Ref. 1; BAB28666." evidence="12" ref="1">
    <original>Y</original>
    <variation>C</variation>
    <location>
        <position position="318"/>
    </location>
</feature>
<feature type="helix" evidence="21">
    <location>
        <begin position="38"/>
        <end position="43"/>
    </location>
</feature>
<feature type="strand" evidence="21">
    <location>
        <begin position="49"/>
        <end position="52"/>
    </location>
</feature>
<feature type="strand" evidence="21">
    <location>
        <begin position="58"/>
        <end position="63"/>
    </location>
</feature>
<feature type="strand" evidence="21">
    <location>
        <begin position="67"/>
        <end position="76"/>
    </location>
</feature>
<feature type="helix" evidence="21">
    <location>
        <begin position="79"/>
        <end position="81"/>
    </location>
</feature>
<feature type="strand" evidence="21">
    <location>
        <begin position="84"/>
        <end position="86"/>
    </location>
</feature>
<feature type="helix" evidence="21">
    <location>
        <begin position="89"/>
        <end position="96"/>
    </location>
</feature>
<feature type="strand" evidence="21">
    <location>
        <begin position="101"/>
        <end position="104"/>
    </location>
</feature>
<feature type="helix" evidence="21">
    <location>
        <begin position="107"/>
        <end position="115"/>
    </location>
</feature>
<feature type="strand" evidence="21">
    <location>
        <begin position="119"/>
        <end position="124"/>
    </location>
</feature>
<feature type="strand" evidence="21">
    <location>
        <begin position="129"/>
        <end position="137"/>
    </location>
</feature>
<feature type="helix" evidence="21">
    <location>
        <begin position="140"/>
        <end position="152"/>
    </location>
</feature>
<feature type="helix" evidence="21">
    <location>
        <begin position="158"/>
        <end position="175"/>
    </location>
</feature>
<feature type="helix" evidence="21">
    <location>
        <begin position="179"/>
        <end position="191"/>
    </location>
</feature>
<feature type="turn" evidence="21">
    <location>
        <begin position="196"/>
        <end position="198"/>
    </location>
</feature>
<feature type="helix" evidence="21">
    <location>
        <begin position="205"/>
        <end position="210"/>
    </location>
</feature>
<feature type="helix" evidence="21">
    <location>
        <begin position="213"/>
        <end position="223"/>
    </location>
</feature>
<feature type="helix" evidence="21">
    <location>
        <begin position="226"/>
        <end position="228"/>
    </location>
</feature>
<feature type="strand" evidence="21">
    <location>
        <begin position="229"/>
        <end position="236"/>
    </location>
</feature>
<feature type="helix" evidence="21">
    <location>
        <begin position="239"/>
        <end position="249"/>
    </location>
</feature>
<feature type="strand" evidence="19">
    <location>
        <begin position="250"/>
        <end position="253"/>
    </location>
</feature>
<feature type="strand" evidence="21">
    <location>
        <begin position="258"/>
        <end position="260"/>
    </location>
</feature>
<feature type="strand" evidence="21">
    <location>
        <begin position="273"/>
        <end position="278"/>
    </location>
</feature>
<feature type="strand" evidence="21">
    <location>
        <begin position="282"/>
        <end position="292"/>
    </location>
</feature>
<feature type="helix" evidence="21">
    <location>
        <begin position="300"/>
        <end position="311"/>
    </location>
</feature>
<feature type="strand" evidence="20">
    <location>
        <begin position="313"/>
        <end position="315"/>
    </location>
</feature>
<feature type="helix" evidence="21">
    <location>
        <begin position="321"/>
        <end position="323"/>
    </location>
</feature>
<feature type="helix" evidence="21">
    <location>
        <begin position="327"/>
        <end position="335"/>
    </location>
</feature>
<feature type="strand" evidence="21">
    <location>
        <begin position="339"/>
        <end position="348"/>
    </location>
</feature>
<feature type="strand" evidence="21">
    <location>
        <begin position="351"/>
        <end position="360"/>
    </location>
</feature>
<feature type="helix" evidence="21">
    <location>
        <begin position="362"/>
        <end position="364"/>
    </location>
</feature>
<feature type="helix" evidence="21">
    <location>
        <begin position="365"/>
        <end position="381"/>
    </location>
</feature>
<feature type="helix" evidence="21">
    <location>
        <begin position="385"/>
        <end position="402"/>
    </location>
</feature>
<feature type="helix" evidence="21">
    <location>
        <begin position="406"/>
        <end position="418"/>
    </location>
</feature>
<feature type="helix" evidence="21">
    <location>
        <begin position="426"/>
        <end position="434"/>
    </location>
</feature>
<feature type="helix" evidence="21">
    <location>
        <begin position="438"/>
        <end position="448"/>
    </location>
</feature>
<feature type="turn" evidence="21">
    <location>
        <begin position="449"/>
        <end position="451"/>
    </location>
</feature>
<feature type="strand" evidence="21">
    <location>
        <begin position="455"/>
        <end position="461"/>
    </location>
</feature>
<feature type="strand" evidence="21">
    <location>
        <begin position="463"/>
        <end position="465"/>
    </location>
</feature>
<feature type="helix" evidence="21">
    <location>
        <begin position="468"/>
        <end position="474"/>
    </location>
</feature>
<evidence type="ECO:0000250" key="1"/>
<evidence type="ECO:0000250" key="2">
    <source>
        <dbReference type="UniProtKB" id="P07256"/>
    </source>
</evidence>
<evidence type="ECO:0000250" key="3">
    <source>
        <dbReference type="UniProtKB" id="P31800"/>
    </source>
</evidence>
<evidence type="ECO:0000250" key="4">
    <source>
        <dbReference type="UniProtKB" id="P31930"/>
    </source>
</evidence>
<evidence type="ECO:0000250" key="5">
    <source>
        <dbReference type="UniProtKB" id="Q68FY0"/>
    </source>
</evidence>
<evidence type="ECO:0000269" key="6">
    <source>
    </source>
</evidence>
<evidence type="ECO:0000269" key="7">
    <source>
    </source>
</evidence>
<evidence type="ECO:0000269" key="8">
    <source>
    </source>
</evidence>
<evidence type="ECO:0000269" key="9">
    <source>
    </source>
</evidence>
<evidence type="ECO:0000269" key="10">
    <source>
    </source>
</evidence>
<evidence type="ECO:0000269" key="11">
    <source>
    </source>
</evidence>
<evidence type="ECO:0000305" key="12"/>
<evidence type="ECO:0000312" key="13">
    <source>
        <dbReference type="PDB" id="7O3E"/>
    </source>
</evidence>
<evidence type="ECO:0007744" key="14">
    <source>
        <dbReference type="PDB" id="7O37"/>
    </source>
</evidence>
<evidence type="ECO:0007744" key="15">
    <source>
        <dbReference type="PDB" id="7O3C"/>
    </source>
</evidence>
<evidence type="ECO:0007744" key="16">
    <source>
        <dbReference type="PDB" id="8PW5"/>
    </source>
</evidence>
<evidence type="ECO:0007744" key="17">
    <source>
    </source>
</evidence>
<evidence type="ECO:0007744" key="18">
    <source>
    </source>
</evidence>
<evidence type="ECO:0007829" key="19">
    <source>
        <dbReference type="PDB" id="7O37"/>
    </source>
</evidence>
<evidence type="ECO:0007829" key="20">
    <source>
        <dbReference type="PDB" id="7O3C"/>
    </source>
</evidence>
<evidence type="ECO:0007829" key="21">
    <source>
        <dbReference type="PDB" id="7O3H"/>
    </source>
</evidence>
<accession>Q9CZ13</accession>
<accession>Q3TV75</accession>
<accession>Q9CWL6</accession>
<organism>
    <name type="scientific">Mus musculus</name>
    <name type="common">Mouse</name>
    <dbReference type="NCBI Taxonomy" id="10090"/>
    <lineage>
        <taxon>Eukaryota</taxon>
        <taxon>Metazoa</taxon>
        <taxon>Chordata</taxon>
        <taxon>Craniata</taxon>
        <taxon>Vertebrata</taxon>
        <taxon>Euteleostomi</taxon>
        <taxon>Mammalia</taxon>
        <taxon>Eutheria</taxon>
        <taxon>Euarchontoglires</taxon>
        <taxon>Glires</taxon>
        <taxon>Rodentia</taxon>
        <taxon>Myomorpha</taxon>
        <taxon>Muroidea</taxon>
        <taxon>Muridae</taxon>
        <taxon>Murinae</taxon>
        <taxon>Mus</taxon>
        <taxon>Mus</taxon>
    </lineage>
</organism>
<keyword id="KW-0002">3D-structure</keyword>
<keyword id="KW-0007">Acetylation</keyword>
<keyword id="KW-0903">Direct protein sequencing</keyword>
<keyword id="KW-0249">Electron transport</keyword>
<keyword id="KW-0472">Membrane</keyword>
<keyword id="KW-0496">Mitochondrion</keyword>
<keyword id="KW-0999">Mitochondrion inner membrane</keyword>
<keyword id="KW-0597">Phosphoprotein</keyword>
<keyword id="KW-1185">Reference proteome</keyword>
<keyword id="KW-0679">Respiratory chain</keyword>
<keyword id="KW-0809">Transit peptide</keyword>
<keyword id="KW-0813">Transport</keyword>
<name>QCR1_MOUSE</name>